<name>SYN_LIMRD</name>
<proteinExistence type="inferred from homology"/>
<gene>
    <name evidence="1" type="primary">asnS</name>
    <name type="ordered locus">Lreu_1886</name>
</gene>
<accession>A5VMP9</accession>
<dbReference type="EC" id="6.1.1.22" evidence="1"/>
<dbReference type="EMBL" id="CP000705">
    <property type="protein sequence ID" value="ABQ84123.1"/>
    <property type="molecule type" value="Genomic_DNA"/>
</dbReference>
<dbReference type="RefSeq" id="WP_011953603.1">
    <property type="nucleotide sequence ID" value="NC_009513.1"/>
</dbReference>
<dbReference type="SMR" id="A5VMP9"/>
<dbReference type="STRING" id="557436.Lreu_1886"/>
<dbReference type="KEGG" id="lre:Lreu_1886"/>
<dbReference type="PATRIC" id="fig|557436.17.peg.1960"/>
<dbReference type="eggNOG" id="COG0017">
    <property type="taxonomic scope" value="Bacteria"/>
</dbReference>
<dbReference type="HOGENOM" id="CLU_004553_2_0_9"/>
<dbReference type="Proteomes" id="UP000001991">
    <property type="component" value="Chromosome"/>
</dbReference>
<dbReference type="GO" id="GO:0005737">
    <property type="term" value="C:cytoplasm"/>
    <property type="evidence" value="ECO:0007669"/>
    <property type="project" value="UniProtKB-SubCell"/>
</dbReference>
<dbReference type="GO" id="GO:0004816">
    <property type="term" value="F:asparagine-tRNA ligase activity"/>
    <property type="evidence" value="ECO:0007669"/>
    <property type="project" value="UniProtKB-UniRule"/>
</dbReference>
<dbReference type="GO" id="GO:0005524">
    <property type="term" value="F:ATP binding"/>
    <property type="evidence" value="ECO:0007669"/>
    <property type="project" value="UniProtKB-UniRule"/>
</dbReference>
<dbReference type="GO" id="GO:0140096">
    <property type="term" value="F:catalytic activity, acting on a protein"/>
    <property type="evidence" value="ECO:0007669"/>
    <property type="project" value="UniProtKB-ARBA"/>
</dbReference>
<dbReference type="GO" id="GO:0003676">
    <property type="term" value="F:nucleic acid binding"/>
    <property type="evidence" value="ECO:0007669"/>
    <property type="project" value="InterPro"/>
</dbReference>
<dbReference type="GO" id="GO:0016740">
    <property type="term" value="F:transferase activity"/>
    <property type="evidence" value="ECO:0007669"/>
    <property type="project" value="UniProtKB-ARBA"/>
</dbReference>
<dbReference type="GO" id="GO:0006421">
    <property type="term" value="P:asparaginyl-tRNA aminoacylation"/>
    <property type="evidence" value="ECO:0007669"/>
    <property type="project" value="UniProtKB-UniRule"/>
</dbReference>
<dbReference type="CDD" id="cd04323">
    <property type="entry name" value="AsnRS_cyto_like_N"/>
    <property type="match status" value="1"/>
</dbReference>
<dbReference type="CDD" id="cd00776">
    <property type="entry name" value="AsxRS_core"/>
    <property type="match status" value="1"/>
</dbReference>
<dbReference type="Gene3D" id="3.30.930.10">
    <property type="entry name" value="Bira Bifunctional Protein, Domain 2"/>
    <property type="match status" value="1"/>
</dbReference>
<dbReference type="Gene3D" id="2.40.50.140">
    <property type="entry name" value="Nucleic acid-binding proteins"/>
    <property type="match status" value="1"/>
</dbReference>
<dbReference type="HAMAP" id="MF_00534">
    <property type="entry name" value="Asn_tRNA_synth"/>
    <property type="match status" value="1"/>
</dbReference>
<dbReference type="InterPro" id="IPR004364">
    <property type="entry name" value="Aa-tRNA-synt_II"/>
</dbReference>
<dbReference type="InterPro" id="IPR006195">
    <property type="entry name" value="aa-tRNA-synth_II"/>
</dbReference>
<dbReference type="InterPro" id="IPR045864">
    <property type="entry name" value="aa-tRNA-synth_II/BPL/LPL"/>
</dbReference>
<dbReference type="InterPro" id="IPR004522">
    <property type="entry name" value="Asn-tRNA-ligase"/>
</dbReference>
<dbReference type="InterPro" id="IPR002312">
    <property type="entry name" value="Asp/Asn-tRNA-synth_IIb"/>
</dbReference>
<dbReference type="InterPro" id="IPR012340">
    <property type="entry name" value="NA-bd_OB-fold"/>
</dbReference>
<dbReference type="InterPro" id="IPR004365">
    <property type="entry name" value="NA-bd_OB_tRNA"/>
</dbReference>
<dbReference type="NCBIfam" id="TIGR00457">
    <property type="entry name" value="asnS"/>
    <property type="match status" value="1"/>
</dbReference>
<dbReference type="NCBIfam" id="NF003037">
    <property type="entry name" value="PRK03932.1"/>
    <property type="match status" value="1"/>
</dbReference>
<dbReference type="Pfam" id="PF00152">
    <property type="entry name" value="tRNA-synt_2"/>
    <property type="match status" value="1"/>
</dbReference>
<dbReference type="Pfam" id="PF01336">
    <property type="entry name" value="tRNA_anti-codon"/>
    <property type="match status" value="1"/>
</dbReference>
<dbReference type="PRINTS" id="PR01042">
    <property type="entry name" value="TRNASYNTHASP"/>
</dbReference>
<dbReference type="SUPFAM" id="SSF55681">
    <property type="entry name" value="Class II aaRS and biotin synthetases"/>
    <property type="match status" value="1"/>
</dbReference>
<dbReference type="SUPFAM" id="SSF50249">
    <property type="entry name" value="Nucleic acid-binding proteins"/>
    <property type="match status" value="1"/>
</dbReference>
<dbReference type="PROSITE" id="PS50862">
    <property type="entry name" value="AA_TRNA_LIGASE_II"/>
    <property type="match status" value="1"/>
</dbReference>
<feature type="chain" id="PRO_1000061023" description="Asparagine--tRNA ligase">
    <location>
        <begin position="1"/>
        <end position="432"/>
    </location>
</feature>
<protein>
    <recommendedName>
        <fullName evidence="1">Asparagine--tRNA ligase</fullName>
        <ecNumber evidence="1">6.1.1.22</ecNumber>
    </recommendedName>
    <alternativeName>
        <fullName evidence="1">Asparaginyl-tRNA synthetase</fullName>
        <shortName evidence="1">AsnRS</shortName>
    </alternativeName>
</protein>
<organism>
    <name type="scientific">Limosilactobacillus reuteri (strain DSM 20016)</name>
    <name type="common">Lactobacillus reuteri</name>
    <dbReference type="NCBI Taxonomy" id="557436"/>
    <lineage>
        <taxon>Bacteria</taxon>
        <taxon>Bacillati</taxon>
        <taxon>Bacillota</taxon>
        <taxon>Bacilli</taxon>
        <taxon>Lactobacillales</taxon>
        <taxon>Lactobacillaceae</taxon>
        <taxon>Limosilactobacillus</taxon>
    </lineage>
</organism>
<evidence type="ECO:0000255" key="1">
    <source>
        <dbReference type="HAMAP-Rule" id="MF_00534"/>
    </source>
</evidence>
<sequence length="432" mass="50093">METITISEVPKHVGETVKIGVWLTDKRSSGKIAFLQLRDGTGFFQGIIRKNDVSEEKFDSAKHDLHQETSFWVTGEIAEDKRSKFGYEIHIKDFDIVGESEDYPIGNKEHGIDFLLDNRHLWLRSRKPWALMRIRSRVKLATMEFFEKHGFTQFDAPELTGSAPEGTTELFETDYFDRSAFLSQSGQLYAEAGAMALGRVYTMGPTFRAEKSKTRRHLMEFWMIEPEMAWMHQDESLKIQEQYIAYLVQDLIDHCARELEMVGRSVESLKPFTELPYPRITYKEAIEILQKGGFDVEYGADFGSPEETYLADQFQKPVFILNYPKEIKAFYMPEDPEDSRQVICADLLAPEGYGEIIGGSERSYDYEYITNKLEENGLSKEDYGWYDDLRKYGSIPHSGFGMGLERFLAWITLQDHIRETIPFPRMLNRLNP</sequence>
<keyword id="KW-0030">Aminoacyl-tRNA synthetase</keyword>
<keyword id="KW-0067">ATP-binding</keyword>
<keyword id="KW-0963">Cytoplasm</keyword>
<keyword id="KW-0436">Ligase</keyword>
<keyword id="KW-0547">Nucleotide-binding</keyword>
<keyword id="KW-0648">Protein biosynthesis</keyword>
<keyword id="KW-1185">Reference proteome</keyword>
<reference key="1">
    <citation type="journal article" date="2011" name="PLoS Genet.">
        <title>The evolution of host specialization in the vertebrate gut symbiont Lactobacillus reuteri.</title>
        <authorList>
            <person name="Frese S.A."/>
            <person name="Benson A.K."/>
            <person name="Tannock G.W."/>
            <person name="Loach D.M."/>
            <person name="Kim J."/>
            <person name="Zhang M."/>
            <person name="Oh P.L."/>
            <person name="Heng N.C."/>
            <person name="Patil P.B."/>
            <person name="Juge N."/>
            <person name="Mackenzie D.A."/>
            <person name="Pearson B.M."/>
            <person name="Lapidus A."/>
            <person name="Dalin E."/>
            <person name="Tice H."/>
            <person name="Goltsman E."/>
            <person name="Land M."/>
            <person name="Hauser L."/>
            <person name="Ivanova N."/>
            <person name="Kyrpides N.C."/>
            <person name="Walter J."/>
        </authorList>
    </citation>
    <scope>NUCLEOTIDE SEQUENCE [LARGE SCALE GENOMIC DNA]</scope>
    <source>
        <strain>DSM 20016</strain>
    </source>
</reference>
<comment type="catalytic activity">
    <reaction evidence="1">
        <text>tRNA(Asn) + L-asparagine + ATP = L-asparaginyl-tRNA(Asn) + AMP + diphosphate + H(+)</text>
        <dbReference type="Rhea" id="RHEA:11180"/>
        <dbReference type="Rhea" id="RHEA-COMP:9659"/>
        <dbReference type="Rhea" id="RHEA-COMP:9674"/>
        <dbReference type="ChEBI" id="CHEBI:15378"/>
        <dbReference type="ChEBI" id="CHEBI:30616"/>
        <dbReference type="ChEBI" id="CHEBI:33019"/>
        <dbReference type="ChEBI" id="CHEBI:58048"/>
        <dbReference type="ChEBI" id="CHEBI:78442"/>
        <dbReference type="ChEBI" id="CHEBI:78515"/>
        <dbReference type="ChEBI" id="CHEBI:456215"/>
        <dbReference type="EC" id="6.1.1.22"/>
    </reaction>
</comment>
<comment type="subunit">
    <text evidence="1">Homodimer.</text>
</comment>
<comment type="subcellular location">
    <subcellularLocation>
        <location evidence="1">Cytoplasm</location>
    </subcellularLocation>
</comment>
<comment type="similarity">
    <text evidence="1">Belongs to the class-II aminoacyl-tRNA synthetase family.</text>
</comment>